<feature type="chain" id="PRO_0000186896" description="Uncharacterized protein aq_1029">
    <location>
        <begin position="1"/>
        <end position="131"/>
    </location>
</feature>
<keyword id="KW-1185">Reference proteome</keyword>
<sequence length="131" mass="15249">MQLMDPEKMKKLLEKAKEKGWIADQNVEIKFVILDLKPKWMKCRRTKRLVFQFHMLGDAENKTLCGKTLEEYQILPERQENLVVTQVNMMLGGLGVLVFFDLCPECFGNVNRCEPLKEGEKEKLKEEGLTS</sequence>
<protein>
    <recommendedName>
        <fullName>Uncharacterized protein aq_1029</fullName>
    </recommendedName>
</protein>
<dbReference type="EMBL" id="AE000657">
    <property type="protein sequence ID" value="AAC07102.1"/>
    <property type="molecule type" value="Genomic_DNA"/>
</dbReference>
<dbReference type="PIR" id="G70388">
    <property type="entry name" value="G70388"/>
</dbReference>
<dbReference type="RefSeq" id="NP_213701.1">
    <property type="nucleotide sequence ID" value="NC_000918.1"/>
</dbReference>
<dbReference type="RefSeq" id="WP_010880639.1">
    <property type="nucleotide sequence ID" value="NC_000918.1"/>
</dbReference>
<dbReference type="SMR" id="O67138"/>
<dbReference type="STRING" id="224324.aq_1029"/>
<dbReference type="EnsemblBacteria" id="AAC07102">
    <property type="protein sequence ID" value="AAC07102"/>
    <property type="gene ID" value="aq_1029"/>
</dbReference>
<dbReference type="KEGG" id="aae:aq_1029"/>
<dbReference type="HOGENOM" id="CLU_1923209_0_0_0"/>
<dbReference type="InParanoid" id="O67138"/>
<dbReference type="OrthoDB" id="14416at2"/>
<dbReference type="Proteomes" id="UP000000798">
    <property type="component" value="Chromosome"/>
</dbReference>
<gene>
    <name type="ordered locus">aq_1029</name>
</gene>
<accession>O67138</accession>
<organism>
    <name type="scientific">Aquifex aeolicus (strain VF5)</name>
    <dbReference type="NCBI Taxonomy" id="224324"/>
    <lineage>
        <taxon>Bacteria</taxon>
        <taxon>Pseudomonadati</taxon>
        <taxon>Aquificota</taxon>
        <taxon>Aquificia</taxon>
        <taxon>Aquificales</taxon>
        <taxon>Aquificaceae</taxon>
        <taxon>Aquifex</taxon>
    </lineage>
</organism>
<name>Y1029_AQUAE</name>
<reference key="1">
    <citation type="journal article" date="1998" name="Nature">
        <title>The complete genome of the hyperthermophilic bacterium Aquifex aeolicus.</title>
        <authorList>
            <person name="Deckert G."/>
            <person name="Warren P.V."/>
            <person name="Gaasterland T."/>
            <person name="Young W.G."/>
            <person name="Lenox A.L."/>
            <person name="Graham D.E."/>
            <person name="Overbeek R."/>
            <person name="Snead M.A."/>
            <person name="Keller M."/>
            <person name="Aujay M."/>
            <person name="Huber R."/>
            <person name="Feldman R.A."/>
            <person name="Short J.M."/>
            <person name="Olsen G.J."/>
            <person name="Swanson R.V."/>
        </authorList>
    </citation>
    <scope>NUCLEOTIDE SEQUENCE [LARGE SCALE GENOMIC DNA]</scope>
    <source>
        <strain>VF5</strain>
    </source>
</reference>
<proteinExistence type="predicted"/>